<accession>P33102</accession>
<evidence type="ECO:0000255" key="1">
    <source>
        <dbReference type="HAMAP-Rule" id="MF_01337"/>
    </source>
</evidence>
<evidence type="ECO:0000305" key="2"/>
<protein>
    <recommendedName>
        <fullName evidence="1">Large ribosomal subunit protein uL18</fullName>
    </recommendedName>
    <alternativeName>
        <fullName evidence="2">50S ribosomal protein L18</fullName>
    </alternativeName>
</protein>
<dbReference type="EMBL" id="X17524">
    <property type="protein sequence ID" value="CAA35563.1"/>
    <property type="molecule type" value="Genomic_DNA"/>
</dbReference>
<dbReference type="PIR" id="S29887">
    <property type="entry name" value="S29887"/>
</dbReference>
<dbReference type="SMR" id="P33102"/>
<dbReference type="STRING" id="1232675.GCA_000309825_02142"/>
<dbReference type="GO" id="GO:0022625">
    <property type="term" value="C:cytosolic large ribosomal subunit"/>
    <property type="evidence" value="ECO:0007669"/>
    <property type="project" value="TreeGrafter"/>
</dbReference>
<dbReference type="GO" id="GO:0008097">
    <property type="term" value="F:5S rRNA binding"/>
    <property type="evidence" value="ECO:0007669"/>
    <property type="project" value="TreeGrafter"/>
</dbReference>
<dbReference type="GO" id="GO:0003735">
    <property type="term" value="F:structural constituent of ribosome"/>
    <property type="evidence" value="ECO:0007669"/>
    <property type="project" value="InterPro"/>
</dbReference>
<dbReference type="GO" id="GO:0006412">
    <property type="term" value="P:translation"/>
    <property type="evidence" value="ECO:0007669"/>
    <property type="project" value="UniProtKB-UniRule"/>
</dbReference>
<dbReference type="CDD" id="cd00432">
    <property type="entry name" value="Ribosomal_L18_L5e"/>
    <property type="match status" value="1"/>
</dbReference>
<dbReference type="FunFam" id="3.30.420.100:FF:000001">
    <property type="entry name" value="50S ribosomal protein L18"/>
    <property type="match status" value="1"/>
</dbReference>
<dbReference type="Gene3D" id="3.30.420.100">
    <property type="match status" value="1"/>
</dbReference>
<dbReference type="HAMAP" id="MF_01337_B">
    <property type="entry name" value="Ribosomal_uL18_B"/>
    <property type="match status" value="1"/>
</dbReference>
<dbReference type="InterPro" id="IPR004389">
    <property type="entry name" value="Ribosomal_uL18_bac-type"/>
</dbReference>
<dbReference type="InterPro" id="IPR005484">
    <property type="entry name" value="Ribosomal_uL18_bac/euk"/>
</dbReference>
<dbReference type="NCBIfam" id="TIGR00060">
    <property type="entry name" value="L18_bact"/>
    <property type="match status" value="1"/>
</dbReference>
<dbReference type="PANTHER" id="PTHR12899">
    <property type="entry name" value="39S RIBOSOMAL PROTEIN L18, MITOCHONDRIAL"/>
    <property type="match status" value="1"/>
</dbReference>
<dbReference type="PANTHER" id="PTHR12899:SF3">
    <property type="entry name" value="LARGE RIBOSOMAL SUBUNIT PROTEIN UL18M"/>
    <property type="match status" value="1"/>
</dbReference>
<dbReference type="Pfam" id="PF00861">
    <property type="entry name" value="Ribosomal_L18p"/>
    <property type="match status" value="1"/>
</dbReference>
<dbReference type="SUPFAM" id="SSF53137">
    <property type="entry name" value="Translational machinery components"/>
    <property type="match status" value="1"/>
</dbReference>
<gene>
    <name evidence="1" type="primary">rplR</name>
</gene>
<reference key="1">
    <citation type="journal article" date="1989" name="J. Mol. Evol.">
        <title>Spectinomycin operon of Micrococcus luteus: evolutionary implications of organization and novel codon usage.</title>
        <authorList>
            <person name="Ohama T."/>
            <person name="Muto A."/>
            <person name="Osawa S."/>
        </authorList>
    </citation>
    <scope>NUCLEOTIDE SEQUENCE [GENOMIC DNA]</scope>
</reference>
<comment type="function">
    <text evidence="1">This is one of the proteins that bind and probably mediate the attachment of the 5S RNA into the large ribosomal subunit, where it forms part of the central protuberance.</text>
</comment>
<comment type="subunit">
    <text evidence="1">Part of the 50S ribosomal subunit; part of the 5S rRNA/L5/L18/L25 subcomplex. Contacts the 5S and 23S rRNAs.</text>
</comment>
<comment type="similarity">
    <text evidence="1">Belongs to the universal ribosomal protein uL18 family.</text>
</comment>
<name>RL18_MICLU</name>
<keyword id="KW-0687">Ribonucleoprotein</keyword>
<keyword id="KW-0689">Ribosomal protein</keyword>
<keyword id="KW-0694">RNA-binding</keyword>
<keyword id="KW-0699">rRNA-binding</keyword>
<feature type="chain" id="PRO_0000131292" description="Large ribosomal subunit protein uL18">
    <location>
        <begin position="1"/>
        <end position="119"/>
    </location>
</feature>
<sequence>MKGKGKFNARTRRHLRVRKRISGTTSVPRLVVNRSARHMFVQVVDDTQSRTIAYASTMEADVRALEGDKTAKAKRVGELVAERAKAAGIEAAVFDRAGNKYHGRVAAVADGAREGGLQL</sequence>
<proteinExistence type="inferred from homology"/>
<organism>
    <name type="scientific">Micrococcus luteus</name>
    <name type="common">Micrococcus lysodeikticus</name>
    <dbReference type="NCBI Taxonomy" id="1270"/>
    <lineage>
        <taxon>Bacteria</taxon>
        <taxon>Bacillati</taxon>
        <taxon>Actinomycetota</taxon>
        <taxon>Actinomycetes</taxon>
        <taxon>Micrococcales</taxon>
        <taxon>Micrococcaceae</taxon>
        <taxon>Micrococcus</taxon>
    </lineage>
</organism>